<dbReference type="EMBL" id="CP000851">
    <property type="protein sequence ID" value="ABV85512.1"/>
    <property type="molecule type" value="Genomic_DNA"/>
</dbReference>
<dbReference type="RefSeq" id="WP_005503530.1">
    <property type="nucleotide sequence ID" value="NC_009901.1"/>
</dbReference>
<dbReference type="SMR" id="A8GYX5"/>
<dbReference type="STRING" id="398579.Spea_0183"/>
<dbReference type="KEGG" id="spl:Spea_0183"/>
<dbReference type="eggNOG" id="COG0051">
    <property type="taxonomic scope" value="Bacteria"/>
</dbReference>
<dbReference type="HOGENOM" id="CLU_122625_1_3_6"/>
<dbReference type="OrthoDB" id="9804464at2"/>
<dbReference type="Proteomes" id="UP000002608">
    <property type="component" value="Chromosome"/>
</dbReference>
<dbReference type="GO" id="GO:1990904">
    <property type="term" value="C:ribonucleoprotein complex"/>
    <property type="evidence" value="ECO:0007669"/>
    <property type="project" value="UniProtKB-KW"/>
</dbReference>
<dbReference type="GO" id="GO:0005840">
    <property type="term" value="C:ribosome"/>
    <property type="evidence" value="ECO:0007669"/>
    <property type="project" value="UniProtKB-KW"/>
</dbReference>
<dbReference type="GO" id="GO:0003735">
    <property type="term" value="F:structural constituent of ribosome"/>
    <property type="evidence" value="ECO:0007669"/>
    <property type="project" value="InterPro"/>
</dbReference>
<dbReference type="GO" id="GO:0000049">
    <property type="term" value="F:tRNA binding"/>
    <property type="evidence" value="ECO:0007669"/>
    <property type="project" value="UniProtKB-UniRule"/>
</dbReference>
<dbReference type="GO" id="GO:0006412">
    <property type="term" value="P:translation"/>
    <property type="evidence" value="ECO:0007669"/>
    <property type="project" value="UniProtKB-UniRule"/>
</dbReference>
<dbReference type="FunFam" id="3.30.70.600:FF:000001">
    <property type="entry name" value="30S ribosomal protein S10"/>
    <property type="match status" value="1"/>
</dbReference>
<dbReference type="Gene3D" id="3.30.70.600">
    <property type="entry name" value="Ribosomal protein S10 domain"/>
    <property type="match status" value="1"/>
</dbReference>
<dbReference type="HAMAP" id="MF_00508">
    <property type="entry name" value="Ribosomal_uS10"/>
    <property type="match status" value="1"/>
</dbReference>
<dbReference type="InterPro" id="IPR001848">
    <property type="entry name" value="Ribosomal_uS10"/>
</dbReference>
<dbReference type="InterPro" id="IPR018268">
    <property type="entry name" value="Ribosomal_uS10_CS"/>
</dbReference>
<dbReference type="InterPro" id="IPR027486">
    <property type="entry name" value="Ribosomal_uS10_dom"/>
</dbReference>
<dbReference type="InterPro" id="IPR036838">
    <property type="entry name" value="Ribosomal_uS10_dom_sf"/>
</dbReference>
<dbReference type="NCBIfam" id="NF001861">
    <property type="entry name" value="PRK00596.1"/>
    <property type="match status" value="1"/>
</dbReference>
<dbReference type="NCBIfam" id="TIGR01049">
    <property type="entry name" value="rpsJ_bact"/>
    <property type="match status" value="1"/>
</dbReference>
<dbReference type="PANTHER" id="PTHR11700">
    <property type="entry name" value="30S RIBOSOMAL PROTEIN S10 FAMILY MEMBER"/>
    <property type="match status" value="1"/>
</dbReference>
<dbReference type="Pfam" id="PF00338">
    <property type="entry name" value="Ribosomal_S10"/>
    <property type="match status" value="1"/>
</dbReference>
<dbReference type="PRINTS" id="PR00971">
    <property type="entry name" value="RIBOSOMALS10"/>
</dbReference>
<dbReference type="SMART" id="SM01403">
    <property type="entry name" value="Ribosomal_S10"/>
    <property type="match status" value="1"/>
</dbReference>
<dbReference type="SUPFAM" id="SSF54999">
    <property type="entry name" value="Ribosomal protein S10"/>
    <property type="match status" value="1"/>
</dbReference>
<dbReference type="PROSITE" id="PS00361">
    <property type="entry name" value="RIBOSOMAL_S10"/>
    <property type="match status" value="1"/>
</dbReference>
<sequence>MQNQRIRIRLKGFDHRLIDQSTAEIVETAKRTGAQVRGPIPLPTRKERYTILTSPHVNKDARDQYELRTHKRLVDIVEPTEKTVDALMRLDLAAGVDVQISLG</sequence>
<comment type="function">
    <text evidence="1">Involved in the binding of tRNA to the ribosomes.</text>
</comment>
<comment type="subunit">
    <text evidence="1">Part of the 30S ribosomal subunit.</text>
</comment>
<comment type="similarity">
    <text evidence="1">Belongs to the universal ribosomal protein uS10 family.</text>
</comment>
<proteinExistence type="inferred from homology"/>
<gene>
    <name evidence="1" type="primary">rpsJ</name>
    <name type="ordered locus">Spea_0183</name>
</gene>
<keyword id="KW-1185">Reference proteome</keyword>
<keyword id="KW-0687">Ribonucleoprotein</keyword>
<keyword id="KW-0689">Ribosomal protein</keyword>
<reference key="1">
    <citation type="submission" date="2007-10" db="EMBL/GenBank/DDBJ databases">
        <title>Complete sequence of Shewanella pealeana ATCC 700345.</title>
        <authorList>
            <consortium name="US DOE Joint Genome Institute"/>
            <person name="Copeland A."/>
            <person name="Lucas S."/>
            <person name="Lapidus A."/>
            <person name="Barry K."/>
            <person name="Glavina del Rio T."/>
            <person name="Dalin E."/>
            <person name="Tice H."/>
            <person name="Pitluck S."/>
            <person name="Chertkov O."/>
            <person name="Brettin T."/>
            <person name="Bruce D."/>
            <person name="Detter J.C."/>
            <person name="Han C."/>
            <person name="Schmutz J."/>
            <person name="Larimer F."/>
            <person name="Land M."/>
            <person name="Hauser L."/>
            <person name="Kyrpides N."/>
            <person name="Kim E."/>
            <person name="Zhao J.-S.Z."/>
            <person name="Manno D."/>
            <person name="Hawari J."/>
            <person name="Richardson P."/>
        </authorList>
    </citation>
    <scope>NUCLEOTIDE SEQUENCE [LARGE SCALE GENOMIC DNA]</scope>
    <source>
        <strain>ATCC 700345 / ANG-SQ1</strain>
    </source>
</reference>
<name>RS10_SHEPA</name>
<evidence type="ECO:0000255" key="1">
    <source>
        <dbReference type="HAMAP-Rule" id="MF_00508"/>
    </source>
</evidence>
<evidence type="ECO:0000305" key="2"/>
<accession>A8GYX5</accession>
<feature type="chain" id="PRO_1000081570" description="Small ribosomal subunit protein uS10">
    <location>
        <begin position="1"/>
        <end position="103"/>
    </location>
</feature>
<organism>
    <name type="scientific">Shewanella pealeana (strain ATCC 700345 / ANG-SQ1)</name>
    <dbReference type="NCBI Taxonomy" id="398579"/>
    <lineage>
        <taxon>Bacteria</taxon>
        <taxon>Pseudomonadati</taxon>
        <taxon>Pseudomonadota</taxon>
        <taxon>Gammaproteobacteria</taxon>
        <taxon>Alteromonadales</taxon>
        <taxon>Shewanellaceae</taxon>
        <taxon>Shewanella</taxon>
    </lineage>
</organism>
<protein>
    <recommendedName>
        <fullName evidence="1">Small ribosomal subunit protein uS10</fullName>
    </recommendedName>
    <alternativeName>
        <fullName evidence="2">30S ribosomal protein S10</fullName>
    </alternativeName>
</protein>